<evidence type="ECO:0000255" key="1">
    <source>
        <dbReference type="HAMAP-Rule" id="MF_01060"/>
    </source>
</evidence>
<evidence type="ECO:0000256" key="2">
    <source>
        <dbReference type="SAM" id="MobiDB-lite"/>
    </source>
</evidence>
<feature type="signal peptide" evidence="1">
    <location>
        <begin position="1"/>
        <end position="30"/>
    </location>
</feature>
<feature type="chain" id="PRO_1000136419" description="Periplasmic trehalase">
    <location>
        <begin position="31"/>
        <end position="565"/>
    </location>
</feature>
<feature type="region of interest" description="Disordered" evidence="2">
    <location>
        <begin position="538"/>
        <end position="565"/>
    </location>
</feature>
<feature type="compositionally biased region" description="Polar residues" evidence="2">
    <location>
        <begin position="548"/>
        <end position="565"/>
    </location>
</feature>
<feature type="active site" description="Proton donor/acceptor" evidence="1">
    <location>
        <position position="312"/>
    </location>
</feature>
<feature type="active site" description="Proton donor/acceptor" evidence="1">
    <location>
        <position position="496"/>
    </location>
</feature>
<feature type="binding site" evidence="1">
    <location>
        <position position="152"/>
    </location>
    <ligand>
        <name>substrate</name>
    </ligand>
</feature>
<feature type="binding site" evidence="1">
    <location>
        <begin position="159"/>
        <end position="160"/>
    </location>
    <ligand>
        <name>substrate</name>
    </ligand>
</feature>
<feature type="binding site" evidence="1">
    <location>
        <position position="196"/>
    </location>
    <ligand>
        <name>substrate</name>
    </ligand>
</feature>
<feature type="binding site" evidence="1">
    <location>
        <begin position="205"/>
        <end position="207"/>
    </location>
    <ligand>
        <name>substrate</name>
    </ligand>
</feature>
<feature type="binding site" evidence="1">
    <location>
        <begin position="277"/>
        <end position="279"/>
    </location>
    <ligand>
        <name>substrate</name>
    </ligand>
</feature>
<feature type="binding site" evidence="1">
    <location>
        <position position="310"/>
    </location>
    <ligand>
        <name>substrate</name>
    </ligand>
</feature>
<feature type="binding site" evidence="1">
    <location>
        <position position="511"/>
    </location>
    <ligand>
        <name>substrate</name>
    </ligand>
</feature>
<sequence length="565" mass="63637">MKSPAPSRPQKMALIPACIFLCFAALSVQAEETPVTPQPPDILLGPLFNDVQNAKLFPDQKTFADAVPNSDPLMILADYRMQQNQSGFDLRHFVNVNFTLPKEGEKYVPPEGQSLREHIDGLWPVLTRSTENTEKWDSLLPLPEPYVVPGGRFREVYYWDSYFTMLGLAESGHWDKVADMVANFAHEIDTYGHIPNGNRSYYLSRSQPPFFALMVELLAQHEGDAALKQYLPQMQKEYAYWMDGVENLQAGQQEKRVVKLQDGTLLNRYWDDRDTPRPESWVEDIATAKSNPNRPATEIYRDLRSAAASGWDFSSRWMDNPQQLNTLRTTSIVPVDLNSLMFKMEKILARASKAAGDNAMANQYETLANARQKGIEKYLWNDQQGWYADYDLKSHKVRNQLTAAALFPLYVNAAAKDRANKMATATKTHLLQPGGLNTTSVKSGQQWDAPNGWAPLQWVATEGLQNYGQKEVAMDISWHFLTNVQHTYDREKKLVEKYDVSTTGTGGGGGEYPLQDGFGWTNGVTLKMLDLICPKEQPCDNVPATRPTVKSATTQPSTKEAQPTP</sequence>
<protein>
    <recommendedName>
        <fullName evidence="1">Periplasmic trehalase</fullName>
        <ecNumber evidence="1">3.2.1.28</ecNumber>
    </recommendedName>
    <alternativeName>
        <fullName evidence="1">Alpha,alpha-trehalase</fullName>
    </alternativeName>
    <alternativeName>
        <fullName evidence="1">Alpha,alpha-trehalose glucohydrolase</fullName>
    </alternativeName>
</protein>
<reference key="1">
    <citation type="journal article" date="2008" name="J. Bacteriol.">
        <title>The complete genome sequence of Escherichia coli DH10B: insights into the biology of a laboratory workhorse.</title>
        <authorList>
            <person name="Durfee T."/>
            <person name="Nelson R."/>
            <person name="Baldwin S."/>
            <person name="Plunkett G. III"/>
            <person name="Burland V."/>
            <person name="Mau B."/>
            <person name="Petrosino J.F."/>
            <person name="Qin X."/>
            <person name="Muzny D.M."/>
            <person name="Ayele M."/>
            <person name="Gibbs R.A."/>
            <person name="Csorgo B."/>
            <person name="Posfai G."/>
            <person name="Weinstock G.M."/>
            <person name="Blattner F.R."/>
        </authorList>
    </citation>
    <scope>NUCLEOTIDE SEQUENCE [LARGE SCALE GENOMIC DNA]</scope>
    <source>
        <strain>K12 / DH10B</strain>
    </source>
</reference>
<dbReference type="EC" id="3.2.1.28" evidence="1"/>
<dbReference type="EMBL" id="CP000948">
    <property type="protein sequence ID" value="ACB02367.1"/>
    <property type="molecule type" value="Genomic_DNA"/>
</dbReference>
<dbReference type="RefSeq" id="WP_000841714.1">
    <property type="nucleotide sequence ID" value="NC_010473.1"/>
</dbReference>
<dbReference type="SMR" id="B1XAN8"/>
<dbReference type="CAZy" id="GH37">
    <property type="family name" value="Glycoside Hydrolase Family 37"/>
</dbReference>
<dbReference type="KEGG" id="ecd:ECDH10B_1250"/>
<dbReference type="HOGENOM" id="CLU_006451_3_1_6"/>
<dbReference type="GO" id="GO:0042597">
    <property type="term" value="C:periplasmic space"/>
    <property type="evidence" value="ECO:0007669"/>
    <property type="project" value="UniProtKB-SubCell"/>
</dbReference>
<dbReference type="GO" id="GO:0004555">
    <property type="term" value="F:alpha,alpha-trehalase activity"/>
    <property type="evidence" value="ECO:0007669"/>
    <property type="project" value="UniProtKB-UniRule"/>
</dbReference>
<dbReference type="GO" id="GO:0071474">
    <property type="term" value="P:cellular hyperosmotic response"/>
    <property type="evidence" value="ECO:0007669"/>
    <property type="project" value="InterPro"/>
</dbReference>
<dbReference type="GO" id="GO:0005993">
    <property type="term" value="P:trehalose catabolic process"/>
    <property type="evidence" value="ECO:0007669"/>
    <property type="project" value="InterPro"/>
</dbReference>
<dbReference type="FunFam" id="1.50.10.10:FF:000003">
    <property type="entry name" value="Cytoplasmic trehalase"/>
    <property type="match status" value="1"/>
</dbReference>
<dbReference type="Gene3D" id="1.50.10.10">
    <property type="match status" value="1"/>
</dbReference>
<dbReference type="HAMAP" id="MF_01060">
    <property type="entry name" value="Peripl_trehalase"/>
    <property type="match status" value="1"/>
</dbReference>
<dbReference type="InterPro" id="IPR008928">
    <property type="entry name" value="6-hairpin_glycosidase_sf"/>
</dbReference>
<dbReference type="InterPro" id="IPR012341">
    <property type="entry name" value="6hp_glycosidase-like_sf"/>
</dbReference>
<dbReference type="InterPro" id="IPR001661">
    <property type="entry name" value="Glyco_hydro_37"/>
</dbReference>
<dbReference type="InterPro" id="IPR018232">
    <property type="entry name" value="Glyco_hydro_37_CS"/>
</dbReference>
<dbReference type="InterPro" id="IPR023720">
    <property type="entry name" value="Trehalase_periplasmic"/>
</dbReference>
<dbReference type="NCBIfam" id="NF009773">
    <property type="entry name" value="PRK13270.1"/>
    <property type="match status" value="1"/>
</dbReference>
<dbReference type="NCBIfam" id="NF009774">
    <property type="entry name" value="PRK13271.1"/>
    <property type="match status" value="1"/>
</dbReference>
<dbReference type="PANTHER" id="PTHR23403">
    <property type="entry name" value="TREHALASE"/>
    <property type="match status" value="1"/>
</dbReference>
<dbReference type="PANTHER" id="PTHR23403:SF1">
    <property type="entry name" value="TREHALASE"/>
    <property type="match status" value="1"/>
</dbReference>
<dbReference type="Pfam" id="PF01204">
    <property type="entry name" value="Trehalase"/>
    <property type="match status" value="1"/>
</dbReference>
<dbReference type="PRINTS" id="PR00744">
    <property type="entry name" value="GLHYDRLASE37"/>
</dbReference>
<dbReference type="SUPFAM" id="SSF48208">
    <property type="entry name" value="Six-hairpin glycosidases"/>
    <property type="match status" value="1"/>
</dbReference>
<dbReference type="PROSITE" id="PS00927">
    <property type="entry name" value="TREHALASE_1"/>
    <property type="match status" value="1"/>
</dbReference>
<dbReference type="PROSITE" id="PS00928">
    <property type="entry name" value="TREHALASE_2"/>
    <property type="match status" value="1"/>
</dbReference>
<comment type="function">
    <text evidence="1">Provides the cells with the ability to utilize trehalose at high osmolarity by splitting it into glucose molecules that can subsequently be taken up by the phosphotransferase-mediated uptake system.</text>
</comment>
<comment type="catalytic activity">
    <reaction evidence="1">
        <text>alpha,alpha-trehalose + H2O = alpha-D-glucose + beta-D-glucose</text>
        <dbReference type="Rhea" id="RHEA:32675"/>
        <dbReference type="ChEBI" id="CHEBI:15377"/>
        <dbReference type="ChEBI" id="CHEBI:15903"/>
        <dbReference type="ChEBI" id="CHEBI:16551"/>
        <dbReference type="ChEBI" id="CHEBI:17925"/>
        <dbReference type="EC" id="3.2.1.28"/>
    </reaction>
</comment>
<comment type="subunit">
    <text evidence="1">Monomer.</text>
</comment>
<comment type="subcellular location">
    <subcellularLocation>
        <location evidence="1">Periplasm</location>
    </subcellularLocation>
</comment>
<comment type="similarity">
    <text evidence="1">Belongs to the glycosyl hydrolase 37 family.</text>
</comment>
<proteinExistence type="inferred from homology"/>
<accession>B1XAN8</accession>
<name>TREA_ECODH</name>
<gene>
    <name evidence="1" type="primary">treA</name>
    <name type="ordered locus">ECDH10B_1250</name>
</gene>
<organism>
    <name type="scientific">Escherichia coli (strain K12 / DH10B)</name>
    <dbReference type="NCBI Taxonomy" id="316385"/>
    <lineage>
        <taxon>Bacteria</taxon>
        <taxon>Pseudomonadati</taxon>
        <taxon>Pseudomonadota</taxon>
        <taxon>Gammaproteobacteria</taxon>
        <taxon>Enterobacterales</taxon>
        <taxon>Enterobacteriaceae</taxon>
        <taxon>Escherichia</taxon>
    </lineage>
</organism>
<keyword id="KW-0326">Glycosidase</keyword>
<keyword id="KW-0378">Hydrolase</keyword>
<keyword id="KW-0574">Periplasm</keyword>
<keyword id="KW-0732">Signal</keyword>